<evidence type="ECO:0000255" key="1">
    <source>
        <dbReference type="PROSITE-ProRule" id="PRU00159"/>
    </source>
</evidence>
<evidence type="ECO:0000269" key="2">
    <source>
    </source>
</evidence>
<evidence type="ECO:0000303" key="3">
    <source>
    </source>
</evidence>
<evidence type="ECO:0000303" key="4">
    <source ref="2"/>
</evidence>
<evidence type="ECO:0000305" key="5"/>
<evidence type="ECO:0000305" key="6">
    <source>
    </source>
</evidence>
<evidence type="ECO:0000312" key="7">
    <source>
        <dbReference type="RefSeq" id="XP_016500383.1"/>
    </source>
</evidence>
<reference key="1">
    <citation type="journal article" date="2000" name="Mol. Plant Microbe Interact.">
        <title>Molecular cloning and characterization of a tobacco MAP kinase kinase that interacts with SIPK.</title>
        <authorList>
            <person name="Liu Y."/>
            <person name="Zhang S."/>
            <person name="Klessig D.F."/>
        </authorList>
    </citation>
    <scope>NUCLEOTIDE SEQUENCE [MRNA]</scope>
    <scope>FUNCTION</scope>
    <scope>CATALYTIC ACTIVITY</scope>
    <scope>INTERACTION WITH SIPK</scope>
    <scope>INDUCTION</scope>
</reference>
<reference key="2">
    <citation type="submission" date="2014-05" db="EMBL/GenBank/DDBJ databases">
        <title>Nicotiana tabacum MAP kinase kinase mRNA, complete cds.</title>
        <authorList>
            <person name="Liu C."/>
        </authorList>
    </citation>
    <scope>NUCLEOTIDE SEQUENCE [MRNA]</scope>
</reference>
<reference key="3">
    <citation type="journal article" date="2014" name="Nat. Commun.">
        <title>The tobacco genome sequence and its comparison with those of tomato and potato.</title>
        <authorList>
            <person name="Sierro N."/>
            <person name="Battey J.N."/>
            <person name="Ouadi S."/>
            <person name="Bakaher N."/>
            <person name="Bovet L."/>
            <person name="Willig A."/>
            <person name="Goepfert S."/>
            <person name="Peitsch M.C."/>
            <person name="Ivanov N.V."/>
        </authorList>
    </citation>
    <scope>NUCLEOTIDE SEQUENCE [LARGE SCALE GENOMIC DNA]</scope>
    <source>
        <strain>cv. TN90</strain>
    </source>
</reference>
<keyword id="KW-0067">ATP-binding</keyword>
<keyword id="KW-0418">Kinase</keyword>
<keyword id="KW-0547">Nucleotide-binding</keyword>
<keyword id="KW-0611">Plant defense</keyword>
<keyword id="KW-1185">Reference proteome</keyword>
<keyword id="KW-0723">Serine/threonine-protein kinase</keyword>
<keyword id="KW-0808">Transferase</keyword>
<gene>
    <name evidence="3" type="primary">SIPKK</name>
    <name evidence="4" type="synonym">MEK1</name>
    <name evidence="7" type="ORF">LOC107818847</name>
</gene>
<feature type="chain" id="PRO_0000458765" description="Mitogen-activated protein kinase kinase SIPKK">
    <location>
        <begin position="1"/>
        <end position="357"/>
    </location>
</feature>
<feature type="domain" description="Protein kinase" evidence="1">
    <location>
        <begin position="70"/>
        <end position="330"/>
    </location>
</feature>
<feature type="active site" description="Proton acceptor" evidence="1">
    <location>
        <position position="192"/>
    </location>
</feature>
<feature type="binding site" evidence="1">
    <location>
        <begin position="76"/>
        <end position="84"/>
    </location>
    <ligand>
        <name>ATP</name>
        <dbReference type="ChEBI" id="CHEBI:30616"/>
    </ligand>
</feature>
<feature type="binding site" evidence="1">
    <location>
        <position position="99"/>
    </location>
    <ligand>
        <name>ATP</name>
        <dbReference type="ChEBI" id="CHEBI:30616"/>
    </ligand>
</feature>
<feature type="sequence conflict" description="In Ref. 1; AAF67262 and 2; AIL30512." evidence="5" ref="1 2">
    <original>V</original>
    <variation>A</variation>
    <location>
        <position position="100"/>
    </location>
</feature>
<feature type="sequence conflict" description="In Ref. 1; AAF67262 and 2; AIL30512." evidence="5" ref="1 2">
    <original>C</original>
    <variation>V</variation>
    <location>
        <position position="125"/>
    </location>
</feature>
<organism>
    <name type="scientific">Nicotiana tabacum</name>
    <name type="common">Common tobacco</name>
    <dbReference type="NCBI Taxonomy" id="4097"/>
    <lineage>
        <taxon>Eukaryota</taxon>
        <taxon>Viridiplantae</taxon>
        <taxon>Streptophyta</taxon>
        <taxon>Embryophyta</taxon>
        <taxon>Tracheophyta</taxon>
        <taxon>Spermatophyta</taxon>
        <taxon>Magnoliopsida</taxon>
        <taxon>eudicotyledons</taxon>
        <taxon>Gunneridae</taxon>
        <taxon>Pentapetalae</taxon>
        <taxon>asterids</taxon>
        <taxon>lamiids</taxon>
        <taxon>Solanales</taxon>
        <taxon>Solanaceae</taxon>
        <taxon>Nicotianoideae</taxon>
        <taxon>Nicotianeae</taxon>
        <taxon>Nicotiana</taxon>
    </lineage>
</organism>
<accession>A0A1S4CGX4</accession>
<accession>Q9M6Q9</accession>
<name>SIPKK_TOBAC</name>
<protein>
    <recommendedName>
        <fullName evidence="3">Mitogen-activated protein kinase kinase SIPKK</fullName>
        <ecNumber evidence="6">2.7.12.2</ecNumber>
    </recommendedName>
    <alternativeName>
        <fullName evidence="3">Salicylic acid-induced protein kinase kinase</fullName>
    </alternativeName>
</protein>
<proteinExistence type="evidence at protein level"/>
<sequence length="357" mass="39582">MKKGSLAPNLKLSLPPPDEVNLSKFLTESGTFKDGDLLVNRDGVRIVSQSEVEAPSVIQPSDNQLCLADFEAVKVIGKGNGGIVRLVQHKWTGQFFALKVIQMNIEESMRKHIAQELRINQSSQCPYVVISYQSFFDNGAISIILEYMDGGSLADFLKKVKTIPERYLAAICKQVLKGLWYLHHEKHIIHRDLKPSNLLINHIGDVKITDFGVSAVLASTSGLANTFVGTYNYMSPERILGGAYGYRSDIWSLGLVLLECATGVFPYSPPQADEGWVNVYELMETIVDQPAPSAPPDQFSPQFCSFISACVQKDQKDRLSANELMRHPFITMYDDLDIDLGSYFTSAGPPLATLTEL</sequence>
<dbReference type="EC" id="2.7.12.2" evidence="6"/>
<dbReference type="EMBL" id="AF165186">
    <property type="protein sequence ID" value="AAF67262.1"/>
    <property type="molecule type" value="mRNA"/>
</dbReference>
<dbReference type="EMBL" id="KJ874417">
    <property type="protein sequence ID" value="AIL30512.1"/>
    <property type="molecule type" value="mRNA"/>
</dbReference>
<dbReference type="RefSeq" id="NP_001312961.1">
    <property type="nucleotide sequence ID" value="NM_001326032.1"/>
</dbReference>
<dbReference type="RefSeq" id="XP_016500383.1">
    <property type="nucleotide sequence ID" value="XM_016644897.1"/>
</dbReference>
<dbReference type="SMR" id="A0A1S4CGX4"/>
<dbReference type="STRING" id="4097.A0A1S4CGX4"/>
<dbReference type="PaxDb" id="4097-A0A1S4CGX4"/>
<dbReference type="GeneID" id="107818847"/>
<dbReference type="KEGG" id="nta:107818847"/>
<dbReference type="OMA" id="QMTLTEP"/>
<dbReference type="OrthoDB" id="10252354at2759"/>
<dbReference type="Proteomes" id="UP000084051">
    <property type="component" value="Unplaced"/>
</dbReference>
<dbReference type="GO" id="GO:0005737">
    <property type="term" value="C:cytoplasm"/>
    <property type="evidence" value="ECO:0000318"/>
    <property type="project" value="GO_Central"/>
</dbReference>
<dbReference type="GO" id="GO:0005524">
    <property type="term" value="F:ATP binding"/>
    <property type="evidence" value="ECO:0007669"/>
    <property type="project" value="UniProtKB-KW"/>
</dbReference>
<dbReference type="GO" id="GO:0004708">
    <property type="term" value="F:MAP kinase kinase activity"/>
    <property type="evidence" value="ECO:0007669"/>
    <property type="project" value="UniProtKB-ARBA"/>
</dbReference>
<dbReference type="GO" id="GO:0004674">
    <property type="term" value="F:protein serine/threonine kinase activity"/>
    <property type="evidence" value="ECO:0000318"/>
    <property type="project" value="GO_Central"/>
</dbReference>
<dbReference type="GO" id="GO:0006952">
    <property type="term" value="P:defense response"/>
    <property type="evidence" value="ECO:0007669"/>
    <property type="project" value="UniProtKB-KW"/>
</dbReference>
<dbReference type="GO" id="GO:0051707">
    <property type="term" value="P:response to other organism"/>
    <property type="evidence" value="ECO:0007669"/>
    <property type="project" value="UniProtKB-ARBA"/>
</dbReference>
<dbReference type="CDD" id="cd06623">
    <property type="entry name" value="PKc_MAPKK_plant_like"/>
    <property type="match status" value="1"/>
</dbReference>
<dbReference type="FunFam" id="1.10.510.10:FF:000285">
    <property type="entry name" value="Mitogen-activated protein kinase kinase 6"/>
    <property type="match status" value="1"/>
</dbReference>
<dbReference type="FunFam" id="3.30.200.20:FF:000265">
    <property type="entry name" value="Mitogen-activated protein kinase kinase 6"/>
    <property type="match status" value="1"/>
</dbReference>
<dbReference type="Gene3D" id="3.30.200.20">
    <property type="entry name" value="Phosphorylase Kinase, domain 1"/>
    <property type="match status" value="1"/>
</dbReference>
<dbReference type="Gene3D" id="1.10.510.10">
    <property type="entry name" value="Transferase(Phosphotransferase) domain 1"/>
    <property type="match status" value="1"/>
</dbReference>
<dbReference type="InterPro" id="IPR011009">
    <property type="entry name" value="Kinase-like_dom_sf"/>
</dbReference>
<dbReference type="InterPro" id="IPR000719">
    <property type="entry name" value="Prot_kinase_dom"/>
</dbReference>
<dbReference type="InterPro" id="IPR017441">
    <property type="entry name" value="Protein_kinase_ATP_BS"/>
</dbReference>
<dbReference type="InterPro" id="IPR008271">
    <property type="entry name" value="Ser/Thr_kinase_AS"/>
</dbReference>
<dbReference type="PANTHER" id="PTHR48013">
    <property type="entry name" value="DUAL SPECIFICITY MITOGEN-ACTIVATED PROTEIN KINASE KINASE 5-RELATED"/>
    <property type="match status" value="1"/>
</dbReference>
<dbReference type="PANTHER" id="PTHR48013:SF32">
    <property type="entry name" value="MITOGEN-ACTIVATED PROTEIN KINASE KINASE 2-LIKE"/>
    <property type="match status" value="1"/>
</dbReference>
<dbReference type="Pfam" id="PF00069">
    <property type="entry name" value="Pkinase"/>
    <property type="match status" value="1"/>
</dbReference>
<dbReference type="SMART" id="SM00220">
    <property type="entry name" value="S_TKc"/>
    <property type="match status" value="1"/>
</dbReference>
<dbReference type="SUPFAM" id="SSF56112">
    <property type="entry name" value="Protein kinase-like (PK-like)"/>
    <property type="match status" value="1"/>
</dbReference>
<dbReference type="PROSITE" id="PS00107">
    <property type="entry name" value="PROTEIN_KINASE_ATP"/>
    <property type="match status" value="1"/>
</dbReference>
<dbReference type="PROSITE" id="PS50011">
    <property type="entry name" value="PROTEIN_KINASE_DOM"/>
    <property type="match status" value="1"/>
</dbReference>
<dbReference type="PROSITE" id="PS00108">
    <property type="entry name" value="PROTEIN_KINASE_ST"/>
    <property type="match status" value="1"/>
</dbReference>
<comment type="function">
    <text evidence="2 6">Phosphorylates myelin basic protein (MBP) in vitro (PubMed:10656593). May be involved in disease resistance (Probable).</text>
</comment>
<comment type="catalytic activity">
    <reaction evidence="6">
        <text>L-tyrosyl-[protein] + ATP = O-phospho-L-tyrosyl-[protein] + ADP + H(+)</text>
        <dbReference type="Rhea" id="RHEA:10596"/>
        <dbReference type="Rhea" id="RHEA-COMP:10136"/>
        <dbReference type="Rhea" id="RHEA-COMP:20101"/>
        <dbReference type="ChEBI" id="CHEBI:15378"/>
        <dbReference type="ChEBI" id="CHEBI:30616"/>
        <dbReference type="ChEBI" id="CHEBI:46858"/>
        <dbReference type="ChEBI" id="CHEBI:61978"/>
        <dbReference type="ChEBI" id="CHEBI:456216"/>
        <dbReference type="EC" id="2.7.12.2"/>
    </reaction>
    <physiologicalReaction direction="left-to-right" evidence="6">
        <dbReference type="Rhea" id="RHEA:10597"/>
    </physiologicalReaction>
</comment>
<comment type="catalytic activity">
    <reaction evidence="6">
        <text>L-seryl-[protein] + ATP = O-phospho-L-seryl-[protein] + ADP + H(+)</text>
        <dbReference type="Rhea" id="RHEA:17989"/>
        <dbReference type="Rhea" id="RHEA-COMP:9863"/>
        <dbReference type="Rhea" id="RHEA-COMP:11604"/>
        <dbReference type="ChEBI" id="CHEBI:15378"/>
        <dbReference type="ChEBI" id="CHEBI:29999"/>
        <dbReference type="ChEBI" id="CHEBI:30616"/>
        <dbReference type="ChEBI" id="CHEBI:83421"/>
        <dbReference type="ChEBI" id="CHEBI:456216"/>
        <dbReference type="EC" id="2.7.12.2"/>
    </reaction>
    <physiologicalReaction direction="left-to-right" evidence="6">
        <dbReference type="Rhea" id="RHEA:17990"/>
    </physiologicalReaction>
</comment>
<comment type="catalytic activity">
    <reaction evidence="6">
        <text>L-threonyl-[protein] + ATP = O-phospho-L-threonyl-[protein] + ADP + H(+)</text>
        <dbReference type="Rhea" id="RHEA:46608"/>
        <dbReference type="Rhea" id="RHEA-COMP:11060"/>
        <dbReference type="Rhea" id="RHEA-COMP:11605"/>
        <dbReference type="ChEBI" id="CHEBI:15378"/>
        <dbReference type="ChEBI" id="CHEBI:30013"/>
        <dbReference type="ChEBI" id="CHEBI:30616"/>
        <dbReference type="ChEBI" id="CHEBI:61977"/>
        <dbReference type="ChEBI" id="CHEBI:456216"/>
        <dbReference type="EC" id="2.7.12.2"/>
    </reaction>
    <physiologicalReaction direction="left-to-right" evidence="6">
        <dbReference type="Rhea" id="RHEA:46609"/>
    </physiologicalReaction>
</comment>
<comment type="subunit">
    <text evidence="2">Interacts with SIPK.</text>
</comment>
<comment type="induction">
    <text evidence="2">Induced by tobacco mosaic virus (TMV) infection and wounding.</text>
</comment>
<comment type="similarity">
    <text evidence="5">Belongs to the protein kinase superfamily. STE Ser/Thr protein kinase family. MAP kinase kinase subfamily.</text>
</comment>